<reference key="1">
    <citation type="journal article" date="2000" name="Science">
        <title>The genome sequence of Drosophila melanogaster.</title>
        <authorList>
            <person name="Adams M.D."/>
            <person name="Celniker S.E."/>
            <person name="Holt R.A."/>
            <person name="Evans C.A."/>
            <person name="Gocayne J.D."/>
            <person name="Amanatides P.G."/>
            <person name="Scherer S.E."/>
            <person name="Li P.W."/>
            <person name="Hoskins R.A."/>
            <person name="Galle R.F."/>
            <person name="George R.A."/>
            <person name="Lewis S.E."/>
            <person name="Richards S."/>
            <person name="Ashburner M."/>
            <person name="Henderson S.N."/>
            <person name="Sutton G.G."/>
            <person name="Wortman J.R."/>
            <person name="Yandell M.D."/>
            <person name="Zhang Q."/>
            <person name="Chen L.X."/>
            <person name="Brandon R.C."/>
            <person name="Rogers Y.-H.C."/>
            <person name="Blazej R.G."/>
            <person name="Champe M."/>
            <person name="Pfeiffer B.D."/>
            <person name="Wan K.H."/>
            <person name="Doyle C."/>
            <person name="Baxter E.G."/>
            <person name="Helt G."/>
            <person name="Nelson C.R."/>
            <person name="Miklos G.L.G."/>
            <person name="Abril J.F."/>
            <person name="Agbayani A."/>
            <person name="An H.-J."/>
            <person name="Andrews-Pfannkoch C."/>
            <person name="Baldwin D."/>
            <person name="Ballew R.M."/>
            <person name="Basu A."/>
            <person name="Baxendale J."/>
            <person name="Bayraktaroglu L."/>
            <person name="Beasley E.M."/>
            <person name="Beeson K.Y."/>
            <person name="Benos P.V."/>
            <person name="Berman B.P."/>
            <person name="Bhandari D."/>
            <person name="Bolshakov S."/>
            <person name="Borkova D."/>
            <person name="Botchan M.R."/>
            <person name="Bouck J."/>
            <person name="Brokstein P."/>
            <person name="Brottier P."/>
            <person name="Burtis K.C."/>
            <person name="Busam D.A."/>
            <person name="Butler H."/>
            <person name="Cadieu E."/>
            <person name="Center A."/>
            <person name="Chandra I."/>
            <person name="Cherry J.M."/>
            <person name="Cawley S."/>
            <person name="Dahlke C."/>
            <person name="Davenport L.B."/>
            <person name="Davies P."/>
            <person name="de Pablos B."/>
            <person name="Delcher A."/>
            <person name="Deng Z."/>
            <person name="Mays A.D."/>
            <person name="Dew I."/>
            <person name="Dietz S.M."/>
            <person name="Dodson K."/>
            <person name="Doup L.E."/>
            <person name="Downes M."/>
            <person name="Dugan-Rocha S."/>
            <person name="Dunkov B.C."/>
            <person name="Dunn P."/>
            <person name="Durbin K.J."/>
            <person name="Evangelista C.C."/>
            <person name="Ferraz C."/>
            <person name="Ferriera S."/>
            <person name="Fleischmann W."/>
            <person name="Fosler C."/>
            <person name="Gabrielian A.E."/>
            <person name="Garg N.S."/>
            <person name="Gelbart W.M."/>
            <person name="Glasser K."/>
            <person name="Glodek A."/>
            <person name="Gong F."/>
            <person name="Gorrell J.H."/>
            <person name="Gu Z."/>
            <person name="Guan P."/>
            <person name="Harris M."/>
            <person name="Harris N.L."/>
            <person name="Harvey D.A."/>
            <person name="Heiman T.J."/>
            <person name="Hernandez J.R."/>
            <person name="Houck J."/>
            <person name="Hostin D."/>
            <person name="Houston K.A."/>
            <person name="Howland T.J."/>
            <person name="Wei M.-H."/>
            <person name="Ibegwam C."/>
            <person name="Jalali M."/>
            <person name="Kalush F."/>
            <person name="Karpen G.H."/>
            <person name="Ke Z."/>
            <person name="Kennison J.A."/>
            <person name="Ketchum K.A."/>
            <person name="Kimmel B.E."/>
            <person name="Kodira C.D."/>
            <person name="Kraft C.L."/>
            <person name="Kravitz S."/>
            <person name="Kulp D."/>
            <person name="Lai Z."/>
            <person name="Lasko P."/>
            <person name="Lei Y."/>
            <person name="Levitsky A.A."/>
            <person name="Li J.H."/>
            <person name="Li Z."/>
            <person name="Liang Y."/>
            <person name="Lin X."/>
            <person name="Liu X."/>
            <person name="Mattei B."/>
            <person name="McIntosh T.C."/>
            <person name="McLeod M.P."/>
            <person name="McPherson D."/>
            <person name="Merkulov G."/>
            <person name="Milshina N.V."/>
            <person name="Mobarry C."/>
            <person name="Morris J."/>
            <person name="Moshrefi A."/>
            <person name="Mount S.M."/>
            <person name="Moy M."/>
            <person name="Murphy B."/>
            <person name="Murphy L."/>
            <person name="Muzny D.M."/>
            <person name="Nelson D.L."/>
            <person name="Nelson D.R."/>
            <person name="Nelson K.A."/>
            <person name="Nixon K."/>
            <person name="Nusskern D.R."/>
            <person name="Pacleb J.M."/>
            <person name="Palazzolo M."/>
            <person name="Pittman G.S."/>
            <person name="Pan S."/>
            <person name="Pollard J."/>
            <person name="Puri V."/>
            <person name="Reese M.G."/>
            <person name="Reinert K."/>
            <person name="Remington K."/>
            <person name="Saunders R.D.C."/>
            <person name="Scheeler F."/>
            <person name="Shen H."/>
            <person name="Shue B.C."/>
            <person name="Siden-Kiamos I."/>
            <person name="Simpson M."/>
            <person name="Skupski M.P."/>
            <person name="Smith T.J."/>
            <person name="Spier E."/>
            <person name="Spradling A.C."/>
            <person name="Stapleton M."/>
            <person name="Strong R."/>
            <person name="Sun E."/>
            <person name="Svirskas R."/>
            <person name="Tector C."/>
            <person name="Turner R."/>
            <person name="Venter E."/>
            <person name="Wang A.H."/>
            <person name="Wang X."/>
            <person name="Wang Z.-Y."/>
            <person name="Wassarman D.A."/>
            <person name="Weinstock G.M."/>
            <person name="Weissenbach J."/>
            <person name="Williams S.M."/>
            <person name="Woodage T."/>
            <person name="Worley K.C."/>
            <person name="Wu D."/>
            <person name="Yang S."/>
            <person name="Yao Q.A."/>
            <person name="Ye J."/>
            <person name="Yeh R.-F."/>
            <person name="Zaveri J.S."/>
            <person name="Zhan M."/>
            <person name="Zhang G."/>
            <person name="Zhao Q."/>
            <person name="Zheng L."/>
            <person name="Zheng X.H."/>
            <person name="Zhong F.N."/>
            <person name="Zhong W."/>
            <person name="Zhou X."/>
            <person name="Zhu S.C."/>
            <person name="Zhu X."/>
            <person name="Smith H.O."/>
            <person name="Gibbs R.A."/>
            <person name="Myers E.W."/>
            <person name="Rubin G.M."/>
            <person name="Venter J.C."/>
        </authorList>
    </citation>
    <scope>NUCLEOTIDE SEQUENCE [LARGE SCALE GENOMIC DNA]</scope>
    <source>
        <strain>Berkeley</strain>
    </source>
</reference>
<reference key="2">
    <citation type="journal article" date="2002" name="Genome Biol.">
        <title>Annotation of the Drosophila melanogaster euchromatic genome: a systematic review.</title>
        <authorList>
            <person name="Misra S."/>
            <person name="Crosby M.A."/>
            <person name="Mungall C.J."/>
            <person name="Matthews B.B."/>
            <person name="Campbell K.S."/>
            <person name="Hradecky P."/>
            <person name="Huang Y."/>
            <person name="Kaminker J.S."/>
            <person name="Millburn G.H."/>
            <person name="Prochnik S.E."/>
            <person name="Smith C.D."/>
            <person name="Tupy J.L."/>
            <person name="Whitfield E.J."/>
            <person name="Bayraktaroglu L."/>
            <person name="Berman B.P."/>
            <person name="Bettencourt B.R."/>
            <person name="Celniker S.E."/>
            <person name="de Grey A.D.N.J."/>
            <person name="Drysdale R.A."/>
            <person name="Harris N.L."/>
            <person name="Richter J."/>
            <person name="Russo S."/>
            <person name="Schroeder A.J."/>
            <person name="Shu S.Q."/>
            <person name="Stapleton M."/>
            <person name="Yamada C."/>
            <person name="Ashburner M."/>
            <person name="Gelbart W.M."/>
            <person name="Rubin G.M."/>
            <person name="Lewis S.E."/>
        </authorList>
    </citation>
    <scope>GENOME REANNOTATION</scope>
    <source>
        <strain>Berkeley</strain>
    </source>
</reference>
<reference key="3">
    <citation type="journal article" date="2002" name="Genome Biol.">
        <title>A Drosophila full-length cDNA resource.</title>
        <authorList>
            <person name="Stapleton M."/>
            <person name="Carlson J.W."/>
            <person name="Brokstein P."/>
            <person name="Yu C."/>
            <person name="Champe M."/>
            <person name="George R.A."/>
            <person name="Guarin H."/>
            <person name="Kronmiller B."/>
            <person name="Pacleb J.M."/>
            <person name="Park S."/>
            <person name="Wan K.H."/>
            <person name="Rubin G.M."/>
            <person name="Celniker S.E."/>
        </authorList>
    </citation>
    <scope>NUCLEOTIDE SEQUENCE [LARGE SCALE MRNA]</scope>
    <source>
        <strain>Berkeley</strain>
        <tissue>Head</tissue>
    </source>
</reference>
<reference key="4">
    <citation type="journal article" date="2005" name="Dev. Cell">
        <title>The Drosophila ortholog of the human wnt inhibitor factor shifted controls the diffusion of lipid-modified hedgehog.</title>
        <authorList>
            <person name="Gorfinkiel N."/>
            <person name="Sierra J."/>
            <person name="Callejo A."/>
            <person name="Ibanez C."/>
            <person name="Guerrero I."/>
        </authorList>
    </citation>
    <scope>FUNCTION</scope>
    <scope>SUBCELLULAR LOCATION</scope>
    <scope>TISSUE SPECIFICITY</scope>
    <scope>DEVELOPMENTAL STAGE</scope>
    <scope>INTERACTION WITH HH</scope>
    <scope>MUTAGENESIS OF CYS-363 AND CYS-374</scope>
</reference>
<reference key="5">
    <citation type="journal article" date="2005" name="Dev. Cell">
        <title>Shifted, the Drosophila ortholog of wnt inhibitory factor-1, controls the distribution and movement of hedgehog.</title>
        <authorList>
            <person name="Glise B."/>
            <person name="Miller C.A."/>
            <person name="Crozatier M."/>
            <person name="Halbisen M.A."/>
            <person name="Wise S."/>
            <person name="Olson D.J."/>
            <person name="Vincent A."/>
            <person name="Blair S.S."/>
        </authorList>
    </citation>
    <scope>FUNCTION</scope>
    <scope>SUBCELLULAR LOCATION</scope>
    <scope>TISSUE SPECIFICITY</scope>
    <scope>MUTAGENESIS OF CYS-363 AND CYS-374</scope>
</reference>
<accession>Q9W3W5</accession>
<accession>Q961F3</accession>
<sequence>MTHQGIGCLVKWLYLVLIVHTLLCIGQLECRQQHHNRNNNNNNRRADSSSSEEGHGNTSDGLDNFADQDASFVGHGHQPRRGQRKKQQGGGGGGSGGGGGNGGGGGSRHNRNEESGISLWINEQQLKMLTALYFPQGYSERLYAIHNSRVTNDLRDTTLYNFLVIPSEVNYVNFTWKSGRRKYFYDFDRLQTMDESILKAPTLSIRKSGRIPQEQKNFSIFLPCTGNSSGTASFNVGLKIQTRHNKPLSGTPIRLNFKKECAHRGVYDIDASNPTSLTTLQECSLKCGKNGYCNEHHICKCNVGYTGQYCETAFCFPQCLNGGNCTAPSVCTCPEGYQGTQCEGGICKDKCLNGGKCIQKDKCQCSKGYYGLRCEYSKCVIPCKNEGRCIGNNLCRCPNGLRGDHCEIGRKQRSICKCRNGTCVSHKHCKCHPGFYGRHCNGRKRRHVHRNDDSKF</sequence>
<evidence type="ECO:0000250" key="1"/>
<evidence type="ECO:0000255" key="2"/>
<evidence type="ECO:0000255" key="3">
    <source>
        <dbReference type="PROSITE-ProRule" id="PRU00076"/>
    </source>
</evidence>
<evidence type="ECO:0000255" key="4">
    <source>
        <dbReference type="PROSITE-ProRule" id="PRU00222"/>
    </source>
</evidence>
<evidence type="ECO:0000256" key="5">
    <source>
        <dbReference type="SAM" id="MobiDB-lite"/>
    </source>
</evidence>
<evidence type="ECO:0000269" key="6">
    <source>
    </source>
</evidence>
<evidence type="ECO:0000269" key="7">
    <source>
    </source>
</evidence>
<keyword id="KW-0217">Developmental protein</keyword>
<keyword id="KW-1015">Disulfide bond</keyword>
<keyword id="KW-0245">EGF-like domain</keyword>
<keyword id="KW-0272">Extracellular matrix</keyword>
<keyword id="KW-0325">Glycoprotein</keyword>
<keyword id="KW-1185">Reference proteome</keyword>
<keyword id="KW-0677">Repeat</keyword>
<keyword id="KW-0964">Secreted</keyword>
<keyword id="KW-0732">Signal</keyword>
<gene>
    <name type="primary">shf</name>
    <name type="ORF">CG3135</name>
</gene>
<comment type="function">
    <text evidence="6 7">Required for normal accumulation and movement of lipid-modified hedgehog (hh) morphogen. May act by stabilizing the interaction between heparan sulfate proteoglycans (HSPGs) and hh, HSPGs being required for diffusion of hh morphogen. Not involved in wingless (wg) morphogen movement, suggesting that it may provide HSPG specificity for Hh.</text>
</comment>
<comment type="subunit">
    <text evidence="6">Interacts with hh.</text>
</comment>
<comment type="subcellular location">
    <subcellularLocation>
        <location evidence="6 7">Secreted</location>
        <location evidence="6 7">Extracellular space</location>
        <location evidence="6 7">Extracellular matrix</location>
    </subcellularLocation>
    <text>Colocalizes with HSPG.</text>
</comment>
<comment type="tissue specificity">
    <text evidence="6 7">At the blastoderm stage, it is ubiquitously expressed. As embryogenesis continues, it is expressed in the epidermis and central nervous system, this expression being segmentally modulated. Also highly expressed at the foregut and hindgut throughout embryogenesis. In third instar wing imaginal disks, it is highly expressed in the most anterior and posterior parts of the disk and weakly expressed at the antero/posterior (A/P) compartment border. In the leg disks and the antenna part of the eye-antennal imaginal disk it is also weakly expressed at the A/P compartment border. Weakly expressed in the morphogenetic furrow in the eye primordium.</text>
</comment>
<comment type="developmental stage">
    <text evidence="6">Expressed both maternally and zygotically.</text>
</comment>
<comment type="miscellaneous">
    <text>In contrast to human WIF1 protein, it does not inhibit wg signaling. When transfected into Drosophila, human WIF1 protein inhibits wg function, indicating a different role for shf and WIF-1.</text>
</comment>
<dbReference type="EMBL" id="AE014298">
    <property type="protein sequence ID" value="AAF46198.2"/>
    <property type="molecule type" value="Genomic_DNA"/>
</dbReference>
<dbReference type="EMBL" id="AY051622">
    <property type="protein sequence ID" value="AAK93046.1"/>
    <property type="molecule type" value="mRNA"/>
</dbReference>
<dbReference type="RefSeq" id="NP_572349.1">
    <property type="nucleotide sequence ID" value="NM_132121.3"/>
</dbReference>
<dbReference type="SMR" id="Q9W3W5"/>
<dbReference type="BioGRID" id="58102">
    <property type="interactions" value="6"/>
</dbReference>
<dbReference type="FunCoup" id="Q9W3W5">
    <property type="interactions" value="106"/>
</dbReference>
<dbReference type="IntAct" id="Q9W3W5">
    <property type="interactions" value="4"/>
</dbReference>
<dbReference type="STRING" id="7227.FBpp0309087"/>
<dbReference type="GlyCosmos" id="Q9W3W5">
    <property type="glycosylation" value="6 sites, No reported glycans"/>
</dbReference>
<dbReference type="GlyGen" id="Q9W3W5">
    <property type="glycosylation" value="6 sites"/>
</dbReference>
<dbReference type="PaxDb" id="7227-FBpp0070939"/>
<dbReference type="DNASU" id="31617"/>
<dbReference type="EnsemblMetazoa" id="FBtr0070978">
    <property type="protein sequence ID" value="FBpp0070939"/>
    <property type="gene ID" value="FBgn0003390"/>
</dbReference>
<dbReference type="GeneID" id="31617"/>
<dbReference type="KEGG" id="dme:Dmel_CG3135"/>
<dbReference type="UCSC" id="CG3135-RA">
    <property type="organism name" value="d. melanogaster"/>
</dbReference>
<dbReference type="AGR" id="FB:FBgn0003390"/>
<dbReference type="CTD" id="90525"/>
<dbReference type="FlyBase" id="FBgn0003390">
    <property type="gene designation" value="shf"/>
</dbReference>
<dbReference type="VEuPathDB" id="VectorBase:FBgn0003390"/>
<dbReference type="eggNOG" id="KOG1225">
    <property type="taxonomic scope" value="Eukaryota"/>
</dbReference>
<dbReference type="InParanoid" id="Q9W3W5"/>
<dbReference type="OrthoDB" id="10266706at2759"/>
<dbReference type="PhylomeDB" id="Q9W3W5"/>
<dbReference type="SignaLink" id="Q9W3W5"/>
<dbReference type="BioGRID-ORCS" id="31617">
    <property type="hits" value="0 hits in 3 CRISPR screens"/>
</dbReference>
<dbReference type="ChiTaRS" id="shf">
    <property type="organism name" value="fly"/>
</dbReference>
<dbReference type="GenomeRNAi" id="31617"/>
<dbReference type="PRO" id="PR:Q9W3W5"/>
<dbReference type="Proteomes" id="UP000000803">
    <property type="component" value="Chromosome X"/>
</dbReference>
<dbReference type="Bgee" id="FBgn0003390">
    <property type="expression patterns" value="Expressed in crop (Drosophila) and 53 other cell types or tissues"/>
</dbReference>
<dbReference type="ExpressionAtlas" id="Q9W3W5">
    <property type="expression patterns" value="baseline and differential"/>
</dbReference>
<dbReference type="GO" id="GO:0009986">
    <property type="term" value="C:cell surface"/>
    <property type="evidence" value="ECO:0000318"/>
    <property type="project" value="GO_Central"/>
</dbReference>
<dbReference type="GO" id="GO:0031012">
    <property type="term" value="C:extracellular matrix"/>
    <property type="evidence" value="ECO:0000314"/>
    <property type="project" value="UniProtKB"/>
</dbReference>
<dbReference type="GO" id="GO:0005576">
    <property type="term" value="C:extracellular region"/>
    <property type="evidence" value="ECO:0000314"/>
    <property type="project" value="UniProtKB"/>
</dbReference>
<dbReference type="GO" id="GO:0005102">
    <property type="term" value="F:signaling receptor binding"/>
    <property type="evidence" value="ECO:0000318"/>
    <property type="project" value="GO_Central"/>
</dbReference>
<dbReference type="GO" id="GO:0045880">
    <property type="term" value="P:positive regulation of smoothened signaling pathway"/>
    <property type="evidence" value="ECO:0000315"/>
    <property type="project" value="FlyBase"/>
</dbReference>
<dbReference type="GO" id="GO:0071692">
    <property type="term" value="P:protein localization to extracellular region"/>
    <property type="evidence" value="ECO:0000315"/>
    <property type="project" value="FlyBase"/>
</dbReference>
<dbReference type="GO" id="GO:0050821">
    <property type="term" value="P:protein stabilization"/>
    <property type="evidence" value="ECO:0000315"/>
    <property type="project" value="UniProtKB"/>
</dbReference>
<dbReference type="GO" id="GO:0008039">
    <property type="term" value="P:synaptic target recognition"/>
    <property type="evidence" value="ECO:0000315"/>
    <property type="project" value="FlyBase"/>
</dbReference>
<dbReference type="FunFam" id="2.10.25.10:FF:000482">
    <property type="entry name" value="Shifted, isoform B"/>
    <property type="match status" value="1"/>
</dbReference>
<dbReference type="FunFam" id="2.10.25.10:FF:000656">
    <property type="entry name" value="Shifted, isoform B"/>
    <property type="match status" value="1"/>
</dbReference>
<dbReference type="FunFam" id="2.60.40.2170:FF:000003">
    <property type="entry name" value="Shifted, isoform B"/>
    <property type="match status" value="1"/>
</dbReference>
<dbReference type="Gene3D" id="2.10.25.10">
    <property type="entry name" value="Laminin"/>
    <property type="match status" value="3"/>
</dbReference>
<dbReference type="Gene3D" id="2.60.40.2170">
    <property type="entry name" value="Wnt, WIF domain"/>
    <property type="match status" value="1"/>
</dbReference>
<dbReference type="InterPro" id="IPR050969">
    <property type="entry name" value="Dev_Signal_Modulators"/>
</dbReference>
<dbReference type="InterPro" id="IPR013032">
    <property type="entry name" value="EGF-like_CS"/>
</dbReference>
<dbReference type="InterPro" id="IPR000742">
    <property type="entry name" value="EGF-like_dom"/>
</dbReference>
<dbReference type="InterPro" id="IPR003306">
    <property type="entry name" value="WIF"/>
</dbReference>
<dbReference type="InterPro" id="IPR038677">
    <property type="entry name" value="WIF_sf"/>
</dbReference>
<dbReference type="PANTHER" id="PTHR14949">
    <property type="entry name" value="EGF-LIKE-DOMAIN, MULTIPLE 7, 8"/>
    <property type="match status" value="1"/>
</dbReference>
<dbReference type="PANTHER" id="PTHR14949:SF32">
    <property type="entry name" value="WNT INHIBITORY FACTOR 1"/>
    <property type="match status" value="1"/>
</dbReference>
<dbReference type="Pfam" id="PF12661">
    <property type="entry name" value="hEGF"/>
    <property type="match status" value="2"/>
</dbReference>
<dbReference type="Pfam" id="PF02019">
    <property type="entry name" value="WIF"/>
    <property type="match status" value="1"/>
</dbReference>
<dbReference type="SMART" id="SM00181">
    <property type="entry name" value="EGF"/>
    <property type="match status" value="5"/>
</dbReference>
<dbReference type="SMART" id="SM00469">
    <property type="entry name" value="WIF"/>
    <property type="match status" value="1"/>
</dbReference>
<dbReference type="PROSITE" id="PS00022">
    <property type="entry name" value="EGF_1"/>
    <property type="match status" value="5"/>
</dbReference>
<dbReference type="PROSITE" id="PS01186">
    <property type="entry name" value="EGF_2"/>
    <property type="match status" value="4"/>
</dbReference>
<dbReference type="PROSITE" id="PS50026">
    <property type="entry name" value="EGF_3"/>
    <property type="match status" value="4"/>
</dbReference>
<dbReference type="PROSITE" id="PS50814">
    <property type="entry name" value="WIF"/>
    <property type="match status" value="1"/>
</dbReference>
<feature type="signal peptide" evidence="2">
    <location>
        <begin position="1"/>
        <end position="30"/>
    </location>
</feature>
<feature type="chain" id="PRO_0000007780" description="Protein shifted">
    <location>
        <begin position="31"/>
        <end position="456"/>
    </location>
</feature>
<feature type="domain" description="WIF" evidence="4">
    <location>
        <begin position="119"/>
        <end position="261"/>
    </location>
</feature>
<feature type="domain" description="EGF-like 1" evidence="3">
    <location>
        <begin position="279"/>
        <end position="311"/>
    </location>
</feature>
<feature type="domain" description="EGF-like 2" evidence="3">
    <location>
        <begin position="315"/>
        <end position="342"/>
    </location>
</feature>
<feature type="domain" description="EGF-like 3" evidence="3">
    <location>
        <begin position="343"/>
        <end position="375"/>
    </location>
</feature>
<feature type="domain" description="EGF-like 4" evidence="3">
    <location>
        <begin position="376"/>
        <end position="407"/>
    </location>
</feature>
<feature type="domain" description="EGF-like 5" evidence="3">
    <location>
        <begin position="412"/>
        <end position="441"/>
    </location>
</feature>
<feature type="region of interest" description="Disordered" evidence="5">
    <location>
        <begin position="34"/>
        <end position="112"/>
    </location>
</feature>
<feature type="compositionally biased region" description="Basic and acidic residues" evidence="5">
    <location>
        <begin position="44"/>
        <end position="55"/>
    </location>
</feature>
<feature type="compositionally biased region" description="Basic residues" evidence="5">
    <location>
        <begin position="77"/>
        <end position="87"/>
    </location>
</feature>
<feature type="compositionally biased region" description="Gly residues" evidence="5">
    <location>
        <begin position="88"/>
        <end position="107"/>
    </location>
</feature>
<feature type="glycosylation site" description="N-linked (GlcNAc...) asparagine" evidence="2">
    <location>
        <position position="57"/>
    </location>
</feature>
<feature type="glycosylation site" description="N-linked (GlcNAc...) asparagine" evidence="2">
    <location>
        <position position="173"/>
    </location>
</feature>
<feature type="glycosylation site" description="N-linked (GlcNAc...) asparagine" evidence="2">
    <location>
        <position position="217"/>
    </location>
</feature>
<feature type="glycosylation site" description="N-linked (GlcNAc...) asparagine" evidence="2">
    <location>
        <position position="227"/>
    </location>
</feature>
<feature type="glycosylation site" description="N-linked (GlcNAc...) asparagine" evidence="2">
    <location>
        <position position="324"/>
    </location>
</feature>
<feature type="glycosylation site" description="N-linked (GlcNAc...) asparagine" evidence="2">
    <location>
        <position position="420"/>
    </location>
</feature>
<feature type="disulfide bond" evidence="1">
    <location>
        <begin position="224"/>
        <end position="261"/>
    </location>
</feature>
<feature type="disulfide bond" evidence="1">
    <location>
        <begin position="283"/>
        <end position="293"/>
    </location>
</feature>
<feature type="disulfide bond" evidence="1">
    <location>
        <begin position="287"/>
        <end position="299"/>
    </location>
</feature>
<feature type="disulfide bond" evidence="1">
    <location>
        <begin position="301"/>
        <end position="310"/>
    </location>
</feature>
<feature type="disulfide bond" evidence="1">
    <location>
        <begin position="315"/>
        <end position="325"/>
    </location>
</feature>
<feature type="disulfide bond" evidence="1">
    <location>
        <begin position="319"/>
        <end position="331"/>
    </location>
</feature>
<feature type="disulfide bond" evidence="1">
    <location>
        <begin position="333"/>
        <end position="342"/>
    </location>
</feature>
<feature type="disulfide bond" evidence="1">
    <location>
        <begin position="347"/>
        <end position="357"/>
    </location>
</feature>
<feature type="disulfide bond" evidence="1">
    <location>
        <begin position="351"/>
        <end position="363"/>
    </location>
</feature>
<feature type="disulfide bond" evidence="1">
    <location>
        <begin position="365"/>
        <end position="374"/>
    </location>
</feature>
<feature type="disulfide bond" evidence="1">
    <location>
        <begin position="379"/>
        <end position="389"/>
    </location>
</feature>
<feature type="disulfide bond" evidence="1">
    <location>
        <begin position="383"/>
        <end position="395"/>
    </location>
</feature>
<feature type="disulfide bond" evidence="1">
    <location>
        <begin position="397"/>
        <end position="406"/>
    </location>
</feature>
<feature type="disulfide bond" evidence="1">
    <location>
        <begin position="416"/>
        <end position="423"/>
    </location>
</feature>
<feature type="disulfide bond" evidence="1">
    <location>
        <begin position="418"/>
        <end position="429"/>
    </location>
</feature>
<feature type="disulfide bond" evidence="1">
    <location>
        <begin position="431"/>
        <end position="440"/>
    </location>
</feature>
<feature type="mutagenesis site" description="In shf919; induces defects in the hh pathway." evidence="6 7">
    <original>C</original>
    <variation>S</variation>
    <location>
        <position position="363"/>
    </location>
</feature>
<feature type="mutagenesis site" description="In shf2; induces defects in the hh pathway." evidence="6 7">
    <original>C</original>
    <variation>S</variation>
    <location>
        <position position="374"/>
    </location>
</feature>
<name>WIF1_DROME</name>
<organism>
    <name type="scientific">Drosophila melanogaster</name>
    <name type="common">Fruit fly</name>
    <dbReference type="NCBI Taxonomy" id="7227"/>
    <lineage>
        <taxon>Eukaryota</taxon>
        <taxon>Metazoa</taxon>
        <taxon>Ecdysozoa</taxon>
        <taxon>Arthropoda</taxon>
        <taxon>Hexapoda</taxon>
        <taxon>Insecta</taxon>
        <taxon>Pterygota</taxon>
        <taxon>Neoptera</taxon>
        <taxon>Endopterygota</taxon>
        <taxon>Diptera</taxon>
        <taxon>Brachycera</taxon>
        <taxon>Muscomorpha</taxon>
        <taxon>Ephydroidea</taxon>
        <taxon>Drosophilidae</taxon>
        <taxon>Drosophila</taxon>
        <taxon>Sophophora</taxon>
    </lineage>
</organism>
<protein>
    <recommendedName>
        <fullName>Protein shifted</fullName>
    </recommendedName>
    <alternativeName>
        <fullName>WIF-1-like protein</fullName>
    </alternativeName>
</protein>
<proteinExistence type="evidence at protein level"/>